<reference key="1">
    <citation type="journal article" date="2003" name="Nature">
        <title>The genome sequence of the filamentous fungus Neurospora crassa.</title>
        <authorList>
            <person name="Galagan J.E."/>
            <person name="Calvo S.E."/>
            <person name="Borkovich K.A."/>
            <person name="Selker E.U."/>
            <person name="Read N.D."/>
            <person name="Jaffe D.B."/>
            <person name="FitzHugh W."/>
            <person name="Ma L.-J."/>
            <person name="Smirnov S."/>
            <person name="Purcell S."/>
            <person name="Rehman B."/>
            <person name="Elkins T."/>
            <person name="Engels R."/>
            <person name="Wang S."/>
            <person name="Nielsen C.B."/>
            <person name="Butler J."/>
            <person name="Endrizzi M."/>
            <person name="Qui D."/>
            <person name="Ianakiev P."/>
            <person name="Bell-Pedersen D."/>
            <person name="Nelson M.A."/>
            <person name="Werner-Washburne M."/>
            <person name="Selitrennikoff C.P."/>
            <person name="Kinsey J.A."/>
            <person name="Braun E.L."/>
            <person name="Zelter A."/>
            <person name="Schulte U."/>
            <person name="Kothe G.O."/>
            <person name="Jedd G."/>
            <person name="Mewes H.-W."/>
            <person name="Staben C."/>
            <person name="Marcotte E."/>
            <person name="Greenberg D."/>
            <person name="Roy A."/>
            <person name="Foley K."/>
            <person name="Naylor J."/>
            <person name="Stange-Thomann N."/>
            <person name="Barrett R."/>
            <person name="Gnerre S."/>
            <person name="Kamal M."/>
            <person name="Kamvysselis M."/>
            <person name="Mauceli E.W."/>
            <person name="Bielke C."/>
            <person name="Rudd S."/>
            <person name="Frishman D."/>
            <person name="Krystofova S."/>
            <person name="Rasmussen C."/>
            <person name="Metzenberg R.L."/>
            <person name="Perkins D.D."/>
            <person name="Kroken S."/>
            <person name="Cogoni C."/>
            <person name="Macino G."/>
            <person name="Catcheside D.E.A."/>
            <person name="Li W."/>
            <person name="Pratt R.J."/>
            <person name="Osmani S.A."/>
            <person name="DeSouza C.P.C."/>
            <person name="Glass N.L."/>
            <person name="Orbach M.J."/>
            <person name="Berglund J.A."/>
            <person name="Voelker R."/>
            <person name="Yarden O."/>
            <person name="Plamann M."/>
            <person name="Seiler S."/>
            <person name="Dunlap J.C."/>
            <person name="Radford A."/>
            <person name="Aramayo R."/>
            <person name="Natvig D.O."/>
            <person name="Alex L.A."/>
            <person name="Mannhaupt G."/>
            <person name="Ebbole D.J."/>
            <person name="Freitag M."/>
            <person name="Paulsen I."/>
            <person name="Sachs M.S."/>
            <person name="Lander E.S."/>
            <person name="Nusbaum C."/>
            <person name="Birren B.W."/>
        </authorList>
    </citation>
    <scope>NUCLEOTIDE SEQUENCE [LARGE SCALE GENOMIC DNA]</scope>
    <source>
        <strain>ATCC 24698 / 74-OR23-1A / CBS 708.71 / DSM 1257 / FGSC 987</strain>
    </source>
</reference>
<reference key="2">
    <citation type="journal article" date="2020" name="Colloids Surf. B Biointerfaces">
        <title>Predicting the self-assembly film structure of class II hydrophobin NC2 and estimating its structural characteristics.</title>
        <authorList>
            <person name="Chang H.J."/>
            <person name="Choi H."/>
            <person name="Na S."/>
        </authorList>
    </citation>
    <scope>FUNCTION</scope>
    <scope>SUBUNIT</scope>
    <scope>BIOTECHNOLOGY</scope>
</reference>
<reference evidence="10" key="3">
    <citation type="submission" date="2013-07" db="PDB data bank">
        <title>Solution Structure of the Chimeric Hydrophobin Nchi2.</title>
        <authorList>
            <person name="Ren Q."/>
            <person name="Macindoe I."/>
            <person name="Sunde M."/>
            <person name="Kwan A."/>
        </authorList>
    </citation>
    <scope>STRUCTURE BY NMR OF 19-79 AND 91-97</scope>
    <scope>DISULFIDE BONDS</scope>
    <scope>SUBUNIT</scope>
</reference>
<reference evidence="9" key="4">
    <citation type="journal article" date="2014" name="Proteins">
        <title>Solution structure and interface-driven self-assembly of NC2, a new member of the Class II hydrophobin proteins.</title>
        <authorList>
            <person name="Ren Q."/>
            <person name="Kwan A.H."/>
            <person name="Sunde M."/>
        </authorList>
    </citation>
    <scope>STRUCTURE BY NMR OF 19-97</scope>
    <scope>DISULFIDE BONDS</scope>
    <scope>SUBUNIT</scope>
    <scope>FUNCTION</scope>
</reference>
<evidence type="ECO:0000250" key="1">
    <source>
        <dbReference type="UniProtKB" id="P79073"/>
    </source>
</evidence>
<evidence type="ECO:0000255" key="2"/>
<evidence type="ECO:0000255" key="3">
    <source>
        <dbReference type="PROSITE-ProRule" id="PRU00498"/>
    </source>
</evidence>
<evidence type="ECO:0000269" key="4">
    <source>
    </source>
</evidence>
<evidence type="ECO:0000269" key="5">
    <source>
    </source>
</evidence>
<evidence type="ECO:0000269" key="6">
    <source ref="3"/>
</evidence>
<evidence type="ECO:0000303" key="7">
    <source>
    </source>
</evidence>
<evidence type="ECO:0000305" key="8"/>
<evidence type="ECO:0007744" key="9">
    <source>
        <dbReference type="PDB" id="4AOG"/>
    </source>
</evidence>
<evidence type="ECO:0007744" key="10">
    <source>
        <dbReference type="PDB" id="4BWH"/>
    </source>
</evidence>
<name>NC2_NEUCR</name>
<protein>
    <recommendedName>
        <fullName evidence="7">Class II hydrophobin NC2</fullName>
    </recommendedName>
</protein>
<gene>
    <name evidence="7" type="primary">NC2</name>
    <name type="ORF">NCU08192</name>
</gene>
<proteinExistence type="evidence at protein level"/>
<sequence>MQFTIATVLSLLTITLAAPAAMERQVPYTPCSGLYGTAQCCATDVLGVADLDCANPPATLANATHFESTCAAIGQRARCCVLPILGQDILCQTPAGL</sequence>
<accession>Q7S3P5</accession>
<dbReference type="EMBL" id="CM002238">
    <property type="protein sequence ID" value="EAA30046.2"/>
    <property type="molecule type" value="Genomic_DNA"/>
</dbReference>
<dbReference type="RefSeq" id="XP_959282.2">
    <property type="nucleotide sequence ID" value="XM_954189.2"/>
</dbReference>
<dbReference type="PDB" id="4AOG">
    <property type="method" value="NMR"/>
    <property type="chains" value="A=19-97"/>
</dbReference>
<dbReference type="PDB" id="4BWH">
    <property type="method" value="NMR"/>
    <property type="chains" value="A=19-80, A=92-97"/>
</dbReference>
<dbReference type="PDBsum" id="4AOG"/>
<dbReference type="PDBsum" id="4BWH"/>
<dbReference type="BMRB" id="Q7S3P5"/>
<dbReference type="SMR" id="Q7S3P5"/>
<dbReference type="STRING" id="367110.Q7S3P5"/>
<dbReference type="PaxDb" id="5141-EFNCRP00000004622"/>
<dbReference type="EnsemblFungi" id="EAA30046">
    <property type="protein sequence ID" value="EAA30046"/>
    <property type="gene ID" value="NCU08192"/>
</dbReference>
<dbReference type="GeneID" id="3875445"/>
<dbReference type="KEGG" id="ncr:NCU08192"/>
<dbReference type="VEuPathDB" id="FungiDB:NCU08192"/>
<dbReference type="HOGENOM" id="CLU_141181_2_2_1"/>
<dbReference type="InParanoid" id="Q7S3P5"/>
<dbReference type="OMA" id="LCETPTG"/>
<dbReference type="OrthoDB" id="4500971at2759"/>
<dbReference type="EvolutionaryTrace" id="Q7S3P5"/>
<dbReference type="Proteomes" id="UP000001805">
    <property type="component" value="Chromosome 3, Linkage Group III"/>
</dbReference>
<dbReference type="GO" id="GO:0005576">
    <property type="term" value="C:extracellular region"/>
    <property type="evidence" value="ECO:0007669"/>
    <property type="project" value="UniProtKB-KW"/>
</dbReference>
<dbReference type="CDD" id="cd23508">
    <property type="entry name" value="hydrophobin_II"/>
    <property type="match status" value="1"/>
</dbReference>
<dbReference type="Gene3D" id="3.20.120.10">
    <property type="entry name" value="Hydrophobin"/>
    <property type="match status" value="1"/>
</dbReference>
<dbReference type="InterPro" id="IPR010636">
    <property type="entry name" value="Cerato-ulmin_hydrophobin"/>
</dbReference>
<dbReference type="InterPro" id="IPR036686">
    <property type="entry name" value="Hydrophobin_sf"/>
</dbReference>
<dbReference type="PANTHER" id="PTHR42341">
    <property type="entry name" value="HYDROPHOBIN"/>
    <property type="match status" value="1"/>
</dbReference>
<dbReference type="PANTHER" id="PTHR42341:SF1">
    <property type="entry name" value="HYDROPHOBIN"/>
    <property type="match status" value="1"/>
</dbReference>
<dbReference type="Pfam" id="PF06766">
    <property type="entry name" value="Hydrophobin_2"/>
    <property type="match status" value="1"/>
</dbReference>
<dbReference type="SUPFAM" id="SSF101751">
    <property type="entry name" value="Hydrophobin II, HfbII"/>
    <property type="match status" value="1"/>
</dbReference>
<comment type="function">
    <text evidence="4 5 8">Aerial growth, conidiation, and dispersal of filamentous fungi in the environment rely upon a capability of their secreting small amphipathic proteins called hydrophobins (HPBs) with low sequence identity. Class I can self-assemble into an outermost layer of rodlet bundles on aerial cell surfaces, conferring cellular hydrophobicity that supports fungal growth, development and dispersal; whereas Class II form highly ordered films at water-air interfaces through intermolecular interactions but contribute nothing to the rodlet structure (Probable). NC2 is a class II hydrophobin that has the potential to adsorb to the hydrophobic interface at the hydrophobic-hydrophilic interface at very high rate but the predicted self-assembly NC2 film possesses a lower flexural rigidity than other class II hydrophobins such as HFBII from Hypocrea jecorina (also known as Trichoderma reesei) (PubMed:24218020, PubMed:32739772).</text>
</comment>
<comment type="subunit">
    <text evidence="4 5 6">Homotrimer (PubMed:32739772). Further self-assembles to form highly ordered films at water-air interfaces through intermolecular interactions (PubMed:24218020, PubMed:32739772, Ref.3).</text>
</comment>
<comment type="subcellular location">
    <subcellularLocation>
        <location evidence="1">Secreted</location>
        <location evidence="1">Cell wall</location>
    </subcellularLocation>
    <subcellularLocation>
        <location evidence="1">Secreted</location>
    </subcellularLocation>
</comment>
<comment type="biotechnology">
    <text evidence="5">A chimeric hydrophobin named NChi2, synthesized by grafting the Cys7-Cys8 loop from EAS into the corresponding location of NC2, was found to be able to self-assemble into both rodlet and monolayer forms depending on the incubating environment which suggests that NChi2 can function as a versatile bionanomaterial for various applications.</text>
</comment>
<comment type="similarity">
    <text evidence="8">Belongs to the cerato-ulmin hydrophobin family.</text>
</comment>
<organism>
    <name type="scientific">Neurospora crassa (strain ATCC 24698 / 74-OR23-1A / CBS 708.71 / DSM 1257 / FGSC 987)</name>
    <dbReference type="NCBI Taxonomy" id="367110"/>
    <lineage>
        <taxon>Eukaryota</taxon>
        <taxon>Fungi</taxon>
        <taxon>Dikarya</taxon>
        <taxon>Ascomycota</taxon>
        <taxon>Pezizomycotina</taxon>
        <taxon>Sordariomycetes</taxon>
        <taxon>Sordariomycetidae</taxon>
        <taxon>Sordariales</taxon>
        <taxon>Sordariaceae</taxon>
        <taxon>Neurospora</taxon>
    </lineage>
</organism>
<feature type="signal peptide" evidence="2">
    <location>
        <begin position="1"/>
        <end position="17"/>
    </location>
</feature>
<feature type="chain" id="PRO_5004292558" description="Class II hydrophobin NC2">
    <location>
        <begin position="18"/>
        <end position="97"/>
    </location>
</feature>
<feature type="glycosylation site" description="N-linked (GlcNAc...) asparagine" evidence="3">
    <location>
        <position position="62"/>
    </location>
</feature>
<feature type="disulfide bond" evidence="4 6 9 10">
    <location>
        <begin position="31"/>
        <end position="79"/>
    </location>
</feature>
<feature type="disulfide bond" evidence="4 6 9 10">
    <location>
        <begin position="40"/>
        <end position="70"/>
    </location>
</feature>
<feature type="disulfide bond" evidence="4 6 9 10">
    <location>
        <begin position="41"/>
        <end position="53"/>
    </location>
</feature>
<feature type="disulfide bond" evidence="6 9">
    <location>
        <begin position="80"/>
        <end position="91"/>
    </location>
</feature>
<keyword id="KW-0002">3D-structure</keyword>
<keyword id="KW-0134">Cell wall</keyword>
<keyword id="KW-1015">Disulfide bond</keyword>
<keyword id="KW-0325">Glycoprotein</keyword>
<keyword id="KW-1185">Reference proteome</keyword>
<keyword id="KW-0964">Secreted</keyword>
<keyword id="KW-0732">Signal</keyword>